<proteinExistence type="inferred from homology"/>
<dbReference type="EMBL" id="FN392320">
    <property type="protein sequence ID" value="CAY68939.1"/>
    <property type="molecule type" value="Genomic_DNA"/>
</dbReference>
<dbReference type="RefSeq" id="XP_002491219.1">
    <property type="nucleotide sequence ID" value="XM_002491174.1"/>
</dbReference>
<dbReference type="SMR" id="C4R0B5"/>
<dbReference type="FunCoup" id="C4R0B5">
    <property type="interactions" value="317"/>
</dbReference>
<dbReference type="STRING" id="644223.C4R0B5"/>
<dbReference type="EnsemblFungi" id="CAY68939">
    <property type="protein sequence ID" value="CAY68939"/>
    <property type="gene ID" value="PAS_chr2-1_0323"/>
</dbReference>
<dbReference type="GeneID" id="8199011"/>
<dbReference type="KEGG" id="ppa:PAS_chr2-1_0323"/>
<dbReference type="eggNOG" id="KOG3326">
    <property type="taxonomic scope" value="Eukaryota"/>
</dbReference>
<dbReference type="HOGENOM" id="CLU_103054_0_0_1"/>
<dbReference type="InParanoid" id="C4R0B5"/>
<dbReference type="OrthoDB" id="284292at2759"/>
<dbReference type="Proteomes" id="UP000000314">
    <property type="component" value="Chromosome 2"/>
</dbReference>
<dbReference type="GO" id="GO:0005759">
    <property type="term" value="C:mitochondrial matrix"/>
    <property type="evidence" value="ECO:0000250"/>
    <property type="project" value="UniProtKB"/>
</dbReference>
<dbReference type="GO" id="GO:0006121">
    <property type="term" value="P:mitochondrial electron transport, succinate to ubiquinone"/>
    <property type="evidence" value="ECO:0000250"/>
    <property type="project" value="UniProtKB"/>
</dbReference>
<dbReference type="GO" id="GO:0034553">
    <property type="term" value="P:mitochondrial respiratory chain complex II assembly"/>
    <property type="evidence" value="ECO:0007669"/>
    <property type="project" value="TreeGrafter"/>
</dbReference>
<dbReference type="GO" id="GO:0018293">
    <property type="term" value="P:protein-FAD linkage"/>
    <property type="evidence" value="ECO:0000250"/>
    <property type="project" value="UniProtKB"/>
</dbReference>
<dbReference type="GO" id="GO:0006099">
    <property type="term" value="P:tricarboxylic acid cycle"/>
    <property type="evidence" value="ECO:0007669"/>
    <property type="project" value="TreeGrafter"/>
</dbReference>
<dbReference type="FunFam" id="1.10.150.250:FF:000002">
    <property type="entry name" value="Succinate dehydrogenase assembly factor 2, mitochondrial"/>
    <property type="match status" value="1"/>
</dbReference>
<dbReference type="Gene3D" id="1.10.150.250">
    <property type="entry name" value="Flavinator of succinate dehydrogenase"/>
    <property type="match status" value="1"/>
</dbReference>
<dbReference type="HAMAP" id="MF_03057">
    <property type="entry name" value="SDHAF2"/>
    <property type="match status" value="1"/>
</dbReference>
<dbReference type="InterPro" id="IPR005631">
    <property type="entry name" value="SDH"/>
</dbReference>
<dbReference type="InterPro" id="IPR036714">
    <property type="entry name" value="SDH_sf"/>
</dbReference>
<dbReference type="InterPro" id="IPR028882">
    <property type="entry name" value="SDHAF2"/>
</dbReference>
<dbReference type="PANTHER" id="PTHR12469">
    <property type="entry name" value="PROTEIN EMI5 HOMOLOG, MITOCHONDRIAL"/>
    <property type="match status" value="1"/>
</dbReference>
<dbReference type="PANTHER" id="PTHR12469:SF2">
    <property type="entry name" value="SUCCINATE DEHYDROGENASE ASSEMBLY FACTOR 2, MITOCHONDRIAL"/>
    <property type="match status" value="1"/>
</dbReference>
<dbReference type="Pfam" id="PF03937">
    <property type="entry name" value="Sdh5"/>
    <property type="match status" value="1"/>
</dbReference>
<dbReference type="SUPFAM" id="SSF109910">
    <property type="entry name" value="YgfY-like"/>
    <property type="match status" value="1"/>
</dbReference>
<keyword id="KW-0143">Chaperone</keyword>
<keyword id="KW-0496">Mitochondrion</keyword>
<keyword id="KW-1185">Reference proteome</keyword>
<feature type="chain" id="PRO_0000383197" description="Succinate dehydrogenase assembly factor 2, mitochondrial">
    <location>
        <begin position="1"/>
        <end position="190"/>
    </location>
</feature>
<comment type="function">
    <text evidence="1">Plays an essential role in the assembly of succinate dehydrogenase (SDH), an enzyme complex (also referred to as respiratory complex II) that is a component of both the tricarboxylic acid (TCA) cycle and the mitochondrial electron transport chain, and which couples the oxidation of succinate to fumarate with the reduction of ubiquinone (coenzyme Q) to ubiquinol. Required for flavinylation (covalent attachment of FAD) of the flavoprotein subunit of the SDH catalytic dimer.</text>
</comment>
<comment type="subunit">
    <text evidence="1">Interacts with the flavoprotein subunit within the SDH catalytic dimer.</text>
</comment>
<comment type="subcellular location">
    <subcellularLocation>
        <location evidence="1">Mitochondrion matrix</location>
    </subcellularLocation>
</comment>
<comment type="miscellaneous">
    <text evidence="1">This protein may be expected to contain an N-terminal transit peptide but none has been predicted.</text>
</comment>
<comment type="similarity">
    <text evidence="1">Belongs to the SDHAF2 family.</text>
</comment>
<gene>
    <name type="ordered locus">PAS_chr2-1_0323</name>
</gene>
<protein>
    <recommendedName>
        <fullName evidence="1">Succinate dehydrogenase assembly factor 2, mitochondrial</fullName>
        <shortName evidence="1">SDH assembly factor 2</shortName>
        <shortName evidence="1">SDHAF2</shortName>
    </recommendedName>
</protein>
<reference key="1">
    <citation type="journal article" date="2009" name="Nat. Biotechnol.">
        <title>Genome sequence of the recombinant protein production host Pichia pastoris.</title>
        <authorList>
            <person name="De Schutter K."/>
            <person name="Lin Y.-C."/>
            <person name="Tiels P."/>
            <person name="Van Hecke A."/>
            <person name="Glinka S."/>
            <person name="Weber-Lehmann J."/>
            <person name="Rouze P."/>
            <person name="Van de Peer Y."/>
            <person name="Callewaert N."/>
        </authorList>
    </citation>
    <scope>NUCLEOTIDE SEQUENCE [LARGE SCALE GENOMIC DNA]</scope>
    <source>
        <strain>GS115 / ATCC 20864</strain>
    </source>
</reference>
<accession>C4R0B5</accession>
<sequence length="190" mass="22414">METTCGLPVLPQKISVNFMLRETVDDLGLSKSVTFFLLNSPIMLRLFQRTQFQGSKTCPRVFSKSFHSLPFLRQELILKVEPLKRDNESEDVKRRRLVYQSRKRGILETDLLLSRFAKRYLPTMSVEEMEEYDDLLNELDWDIYYWAVKNYEVTPLPEKWKDSKILAKLQEMSANNEGEILRMPNLDDSP</sequence>
<organism>
    <name type="scientific">Komagataella phaffii (strain GS115 / ATCC 20864)</name>
    <name type="common">Yeast</name>
    <name type="synonym">Pichia pastoris</name>
    <dbReference type="NCBI Taxonomy" id="644223"/>
    <lineage>
        <taxon>Eukaryota</taxon>
        <taxon>Fungi</taxon>
        <taxon>Dikarya</taxon>
        <taxon>Ascomycota</taxon>
        <taxon>Saccharomycotina</taxon>
        <taxon>Pichiomycetes</taxon>
        <taxon>Pichiales</taxon>
        <taxon>Pichiaceae</taxon>
        <taxon>Komagataella</taxon>
    </lineage>
</organism>
<name>SDHF2_KOMPG</name>
<evidence type="ECO:0000255" key="1">
    <source>
        <dbReference type="HAMAP-Rule" id="MF_03057"/>
    </source>
</evidence>